<comment type="function">
    <text evidence="2">E3 ubiquitin-protein ligase which accepts ubiquitin from an E2 ubiquitin-conjugating enzyme in the form of a thioester and then directly transfers the ubiquitin to targeted substrates. Probably involved in the regulatory network controlling carbon source utilization.</text>
</comment>
<comment type="catalytic activity">
    <reaction>
        <text>S-ubiquitinyl-[E2 ubiquitin-conjugating enzyme]-L-cysteine + [acceptor protein]-L-lysine = [E2 ubiquitin-conjugating enzyme]-L-cysteine + N(6)-ubiquitinyl-[acceptor protein]-L-lysine.</text>
        <dbReference type="EC" id="2.3.2.26"/>
    </reaction>
</comment>
<comment type="pathway">
    <text>Protein modification; protein ubiquitination.</text>
</comment>
<comment type="subunit">
    <text evidence="2">Interacts with creD.</text>
</comment>
<comment type="subcellular location">
    <subcellularLocation>
        <location evidence="1">Cytoplasm</location>
    </subcellularLocation>
</comment>
<comment type="similarity">
    <text evidence="7">Belongs to the RSP5/NEDD4 family.</text>
</comment>
<dbReference type="EC" id="2.3.2.26"/>
<dbReference type="EMBL" id="EQ963474">
    <property type="protein sequence ID" value="EED54915.1"/>
    <property type="molecule type" value="Genomic_DNA"/>
</dbReference>
<dbReference type="RefSeq" id="XP_002376187.1">
    <property type="nucleotide sequence ID" value="XM_002376146.1"/>
</dbReference>
<dbReference type="SMR" id="B8N7E5"/>
<dbReference type="STRING" id="332952.B8N7E5"/>
<dbReference type="EnsemblFungi" id="EED54915">
    <property type="protein sequence ID" value="EED54915"/>
    <property type="gene ID" value="AFLA_021670"/>
</dbReference>
<dbReference type="VEuPathDB" id="FungiDB:AFLA_002645"/>
<dbReference type="eggNOG" id="KOG0940">
    <property type="taxonomic scope" value="Eukaryota"/>
</dbReference>
<dbReference type="HOGENOM" id="CLU_002173_0_0_1"/>
<dbReference type="OMA" id="WKRPTLD"/>
<dbReference type="UniPathway" id="UPA00143"/>
<dbReference type="GO" id="GO:0005934">
    <property type="term" value="C:cellular bud tip"/>
    <property type="evidence" value="ECO:0007669"/>
    <property type="project" value="EnsemblFungi"/>
</dbReference>
<dbReference type="GO" id="GO:0022626">
    <property type="term" value="C:cytosolic ribosome"/>
    <property type="evidence" value="ECO:0007669"/>
    <property type="project" value="EnsemblFungi"/>
</dbReference>
<dbReference type="GO" id="GO:0010008">
    <property type="term" value="C:endosome membrane"/>
    <property type="evidence" value="ECO:0007669"/>
    <property type="project" value="EnsemblFungi"/>
</dbReference>
<dbReference type="GO" id="GO:0005794">
    <property type="term" value="C:Golgi apparatus"/>
    <property type="evidence" value="ECO:0007669"/>
    <property type="project" value="EnsemblFungi"/>
</dbReference>
<dbReference type="GO" id="GO:0005634">
    <property type="term" value="C:nucleus"/>
    <property type="evidence" value="ECO:0007669"/>
    <property type="project" value="EnsemblFungi"/>
</dbReference>
<dbReference type="GO" id="GO:1990306">
    <property type="term" value="C:RSP5-BUL ubiquitin ligase complex"/>
    <property type="evidence" value="ECO:0007669"/>
    <property type="project" value="EnsemblFungi"/>
</dbReference>
<dbReference type="GO" id="GO:0000151">
    <property type="term" value="C:ubiquitin ligase complex"/>
    <property type="evidence" value="ECO:0007669"/>
    <property type="project" value="EnsemblFungi"/>
</dbReference>
<dbReference type="GO" id="GO:0035091">
    <property type="term" value="F:phosphatidylinositol binding"/>
    <property type="evidence" value="ECO:0007669"/>
    <property type="project" value="EnsemblFungi"/>
</dbReference>
<dbReference type="GO" id="GO:0043130">
    <property type="term" value="F:ubiquitin binding"/>
    <property type="evidence" value="ECO:0007669"/>
    <property type="project" value="EnsemblFungi"/>
</dbReference>
<dbReference type="GO" id="GO:0034450">
    <property type="term" value="F:ubiquitin-ubiquitin ligase activity"/>
    <property type="evidence" value="ECO:0007669"/>
    <property type="project" value="EnsemblFungi"/>
</dbReference>
<dbReference type="GO" id="GO:0034605">
    <property type="term" value="P:cellular response to heat"/>
    <property type="evidence" value="ECO:0007669"/>
    <property type="project" value="EnsemblFungi"/>
</dbReference>
<dbReference type="GO" id="GO:1903577">
    <property type="term" value="P:cellular response to L-arginine"/>
    <property type="evidence" value="ECO:0007669"/>
    <property type="project" value="EnsemblFungi"/>
</dbReference>
<dbReference type="GO" id="GO:0006325">
    <property type="term" value="P:chromatin organization"/>
    <property type="evidence" value="ECO:0007669"/>
    <property type="project" value="EnsemblFungi"/>
</dbReference>
<dbReference type="GO" id="GO:0010994">
    <property type="term" value="P:free ubiquitin chain polymerization"/>
    <property type="evidence" value="ECO:0007669"/>
    <property type="project" value="EnsemblFungi"/>
</dbReference>
<dbReference type="GO" id="GO:0072671">
    <property type="term" value="P:mitochondria-associated ubiquitin-dependent protein catabolic process"/>
    <property type="evidence" value="ECO:0007669"/>
    <property type="project" value="EnsemblFungi"/>
</dbReference>
<dbReference type="GO" id="GO:0007005">
    <property type="term" value="P:mitochondrion organization"/>
    <property type="evidence" value="ECO:0007669"/>
    <property type="project" value="EnsemblFungi"/>
</dbReference>
<dbReference type="GO" id="GO:0070651">
    <property type="term" value="P:nonfunctional rRNA decay"/>
    <property type="evidence" value="ECO:0007669"/>
    <property type="project" value="EnsemblFungi"/>
</dbReference>
<dbReference type="GO" id="GO:0016973">
    <property type="term" value="P:poly(A)+ mRNA export from nucleus"/>
    <property type="evidence" value="ECO:0007669"/>
    <property type="project" value="EnsemblFungi"/>
</dbReference>
<dbReference type="GO" id="GO:0045723">
    <property type="term" value="P:positive regulation of fatty acid biosynthetic process"/>
    <property type="evidence" value="ECO:0007669"/>
    <property type="project" value="EnsemblFungi"/>
</dbReference>
<dbReference type="GO" id="GO:0032436">
    <property type="term" value="P:positive regulation of proteasomal ubiquitin-dependent protein catabolic process"/>
    <property type="evidence" value="ECO:0007669"/>
    <property type="project" value="EnsemblFungi"/>
</dbReference>
<dbReference type="GO" id="GO:0048260">
    <property type="term" value="P:positive regulation of receptor-mediated endocytosis"/>
    <property type="evidence" value="ECO:0007669"/>
    <property type="project" value="EnsemblFungi"/>
</dbReference>
<dbReference type="GO" id="GO:0045944">
    <property type="term" value="P:positive regulation of transcription by RNA polymerase II"/>
    <property type="evidence" value="ECO:0007669"/>
    <property type="project" value="EnsemblFungi"/>
</dbReference>
<dbReference type="GO" id="GO:0070534">
    <property type="term" value="P:protein K63-linked ubiquitination"/>
    <property type="evidence" value="ECO:0007669"/>
    <property type="project" value="EnsemblFungi"/>
</dbReference>
<dbReference type="GO" id="GO:0006515">
    <property type="term" value="P:protein quality control for misfolded or incompletely synthesized proteins"/>
    <property type="evidence" value="ECO:0007669"/>
    <property type="project" value="EnsemblFungi"/>
</dbReference>
<dbReference type="GO" id="GO:0043328">
    <property type="term" value="P:protein transport to vacuole involved in ubiquitin-dependent protein catabolic process via the multivesicular body sorting pathway"/>
    <property type="evidence" value="ECO:0007669"/>
    <property type="project" value="EnsemblFungi"/>
</dbReference>
<dbReference type="GO" id="GO:0032956">
    <property type="term" value="P:regulation of actin cytoskeleton organization"/>
    <property type="evidence" value="ECO:0007669"/>
    <property type="project" value="EnsemblFungi"/>
</dbReference>
<dbReference type="GO" id="GO:0010794">
    <property type="term" value="P:regulation of dolichol biosynthetic process"/>
    <property type="evidence" value="ECO:0007669"/>
    <property type="project" value="EnsemblFungi"/>
</dbReference>
<dbReference type="GO" id="GO:0032443">
    <property type="term" value="P:regulation of ergosterol biosynthetic process"/>
    <property type="evidence" value="ECO:0007669"/>
    <property type="project" value="EnsemblFungi"/>
</dbReference>
<dbReference type="GO" id="GO:0010793">
    <property type="term" value="P:regulation of mRNA export from nucleus"/>
    <property type="evidence" value="ECO:0007669"/>
    <property type="project" value="EnsemblFungi"/>
</dbReference>
<dbReference type="GO" id="GO:0006808">
    <property type="term" value="P:regulation of nitrogen utilization"/>
    <property type="evidence" value="ECO:0007669"/>
    <property type="project" value="EnsemblFungi"/>
</dbReference>
<dbReference type="GO" id="GO:0019220">
    <property type="term" value="P:regulation of phosphate metabolic process"/>
    <property type="evidence" value="ECO:0007669"/>
    <property type="project" value="EnsemblFungi"/>
</dbReference>
<dbReference type="GO" id="GO:0032880">
    <property type="term" value="P:regulation of protein localization"/>
    <property type="evidence" value="ECO:0007669"/>
    <property type="project" value="EnsemblFungi"/>
</dbReference>
<dbReference type="GO" id="GO:2000203">
    <property type="term" value="P:regulation of ribosomal large subunit export from nucleus"/>
    <property type="evidence" value="ECO:0007669"/>
    <property type="project" value="EnsemblFungi"/>
</dbReference>
<dbReference type="GO" id="GO:2000232">
    <property type="term" value="P:regulation of rRNA processing"/>
    <property type="evidence" value="ECO:0007669"/>
    <property type="project" value="EnsemblFungi"/>
</dbReference>
<dbReference type="GO" id="GO:2000238">
    <property type="term" value="P:regulation of tRNA export from nucleus"/>
    <property type="evidence" value="ECO:0007669"/>
    <property type="project" value="EnsemblFungi"/>
</dbReference>
<dbReference type="GO" id="GO:2000235">
    <property type="term" value="P:regulation of tRNA processing"/>
    <property type="evidence" value="ECO:0007669"/>
    <property type="project" value="EnsemblFungi"/>
</dbReference>
<dbReference type="GO" id="GO:0010795">
    <property type="term" value="P:regulation of ubiquinone biosynthetic process"/>
    <property type="evidence" value="ECO:0007669"/>
    <property type="project" value="EnsemblFungi"/>
</dbReference>
<dbReference type="GO" id="GO:0034517">
    <property type="term" value="P:ribophagy"/>
    <property type="evidence" value="ECO:0007669"/>
    <property type="project" value="EnsemblFungi"/>
</dbReference>
<dbReference type="GO" id="GO:0070086">
    <property type="term" value="P:ubiquitin-dependent endocytosis"/>
    <property type="evidence" value="ECO:0007669"/>
    <property type="project" value="EnsemblFungi"/>
</dbReference>
<dbReference type="CDD" id="cd08382">
    <property type="entry name" value="C2_Smurf-like"/>
    <property type="match status" value="1"/>
</dbReference>
<dbReference type="CDD" id="cd00078">
    <property type="entry name" value="HECTc"/>
    <property type="match status" value="1"/>
</dbReference>
<dbReference type="CDD" id="cd00201">
    <property type="entry name" value="WW"/>
    <property type="match status" value="3"/>
</dbReference>
<dbReference type="FunFam" id="2.20.70.10:FF:000011">
    <property type="entry name" value="E3 ubiquitin-protein ligase"/>
    <property type="match status" value="1"/>
</dbReference>
<dbReference type="FunFam" id="2.20.70.10:FF:000017">
    <property type="entry name" value="E3 ubiquitin-protein ligase"/>
    <property type="match status" value="1"/>
</dbReference>
<dbReference type="FunFam" id="2.20.70.10:FF:000053">
    <property type="entry name" value="E3 ubiquitin-protein ligase"/>
    <property type="match status" value="1"/>
</dbReference>
<dbReference type="FunFam" id="2.60.40.150:FF:000074">
    <property type="entry name" value="E3 ubiquitin-protein ligase"/>
    <property type="match status" value="1"/>
</dbReference>
<dbReference type="FunFam" id="3.90.1750.10:FF:000005">
    <property type="entry name" value="E3 ubiquitin-protein ligase"/>
    <property type="match status" value="1"/>
</dbReference>
<dbReference type="FunFam" id="3.30.2160.10:FF:000001">
    <property type="entry name" value="E3 ubiquitin-protein ligase NEDD4-like"/>
    <property type="match status" value="1"/>
</dbReference>
<dbReference type="FunFam" id="3.30.2410.10:FF:000001">
    <property type="entry name" value="E3 ubiquitin-protein ligase NEDD4-like"/>
    <property type="match status" value="1"/>
</dbReference>
<dbReference type="Gene3D" id="2.20.70.10">
    <property type="match status" value="2"/>
</dbReference>
<dbReference type="Gene3D" id="2.60.40.150">
    <property type="entry name" value="C2 domain"/>
    <property type="match status" value="1"/>
</dbReference>
<dbReference type="Gene3D" id="3.30.2160.10">
    <property type="entry name" value="Hect, E3 ligase catalytic domain"/>
    <property type="match status" value="1"/>
</dbReference>
<dbReference type="Gene3D" id="3.30.2410.10">
    <property type="entry name" value="Hect, E3 ligase catalytic domain"/>
    <property type="match status" value="1"/>
</dbReference>
<dbReference type="Gene3D" id="3.90.1750.10">
    <property type="entry name" value="Hect, E3 ligase catalytic domains"/>
    <property type="match status" value="1"/>
</dbReference>
<dbReference type="InterPro" id="IPR000008">
    <property type="entry name" value="C2_dom"/>
</dbReference>
<dbReference type="InterPro" id="IPR035892">
    <property type="entry name" value="C2_domain_sf"/>
</dbReference>
<dbReference type="InterPro" id="IPR024928">
    <property type="entry name" value="E3_ub_ligase_SMURF1"/>
</dbReference>
<dbReference type="InterPro" id="IPR050409">
    <property type="entry name" value="E3_ubiq-protein_ligase"/>
</dbReference>
<dbReference type="InterPro" id="IPR000569">
    <property type="entry name" value="HECT_dom"/>
</dbReference>
<dbReference type="InterPro" id="IPR035983">
    <property type="entry name" value="Hect_E3_ubiquitin_ligase"/>
</dbReference>
<dbReference type="InterPro" id="IPR001202">
    <property type="entry name" value="WW_dom"/>
</dbReference>
<dbReference type="InterPro" id="IPR036020">
    <property type="entry name" value="WW_dom_sf"/>
</dbReference>
<dbReference type="PANTHER" id="PTHR11254:SF440">
    <property type="entry name" value="E3 UBIQUITIN-PROTEIN LIGASE NEDD-4"/>
    <property type="match status" value="1"/>
</dbReference>
<dbReference type="PANTHER" id="PTHR11254">
    <property type="entry name" value="HECT DOMAIN UBIQUITIN-PROTEIN LIGASE"/>
    <property type="match status" value="1"/>
</dbReference>
<dbReference type="Pfam" id="PF00168">
    <property type="entry name" value="C2"/>
    <property type="match status" value="1"/>
</dbReference>
<dbReference type="Pfam" id="PF00632">
    <property type="entry name" value="HECT"/>
    <property type="match status" value="1"/>
</dbReference>
<dbReference type="Pfam" id="PF00397">
    <property type="entry name" value="WW"/>
    <property type="match status" value="3"/>
</dbReference>
<dbReference type="PIRSF" id="PIRSF001569">
    <property type="entry name" value="E3_ub_ligase_SMURF1"/>
    <property type="match status" value="1"/>
</dbReference>
<dbReference type="SMART" id="SM00239">
    <property type="entry name" value="C2"/>
    <property type="match status" value="1"/>
</dbReference>
<dbReference type="SMART" id="SM00119">
    <property type="entry name" value="HECTc"/>
    <property type="match status" value="1"/>
</dbReference>
<dbReference type="SMART" id="SM00456">
    <property type="entry name" value="WW"/>
    <property type="match status" value="3"/>
</dbReference>
<dbReference type="SUPFAM" id="SSF49562">
    <property type="entry name" value="C2 domain (Calcium/lipid-binding domain, CaLB)"/>
    <property type="match status" value="1"/>
</dbReference>
<dbReference type="SUPFAM" id="SSF56204">
    <property type="entry name" value="Hect, E3 ligase catalytic domain"/>
    <property type="match status" value="1"/>
</dbReference>
<dbReference type="SUPFAM" id="SSF51045">
    <property type="entry name" value="WW domain"/>
    <property type="match status" value="3"/>
</dbReference>
<dbReference type="PROSITE" id="PS50004">
    <property type="entry name" value="C2"/>
    <property type="match status" value="1"/>
</dbReference>
<dbReference type="PROSITE" id="PS50237">
    <property type="entry name" value="HECT"/>
    <property type="match status" value="1"/>
</dbReference>
<dbReference type="PROSITE" id="PS01159">
    <property type="entry name" value="WW_DOMAIN_1"/>
    <property type="match status" value="3"/>
</dbReference>
<dbReference type="PROSITE" id="PS50020">
    <property type="entry name" value="WW_DOMAIN_2"/>
    <property type="match status" value="3"/>
</dbReference>
<accession>B8N7E5</accession>
<sequence length="812" mass="92148">MTCSQPNLRVTIIAADGLYKRDVFRFPDPFAVATVGGEQTHTTSVIKKTLNPYWNEMFDLRVNEDSILAIQIFDQKKFKKKDQGFLGVINVRIGDVIDLQMGGDEMLTRDLKKSNDNLVVHGKLIINLSTNLSTPNTNQANGLHRSHMQPSTSSGLVPQVSASTPQPSPGPSQADPTASNPSLHPQRVPSTTRPSSTIVPANGPPAPPNGQQGSRTNLSSFEDSQGRLPAGWERREDNLGRTYYVDHNTRTTTWTRPSNNYNEQTSRTQREASMQLERRAHQSRMLPEDRTGASSPNLQENQQQAQTPPAGGSASAVSMMATGATTAGTGELPPGWEQRTTPEGRPYFVDHNTRTTTWVDPRRQQYIRMYGQNANGTNTTIQQQPVSQLGPLPSGWEMRLTNTARVYFVDHNTKTTTWDDPRLPSSLDQGVPQYKRDFRRKLIYFRSQPALRIMSGQCHVKVRRNNIFEDSYAEIMRQSASDLKKRLMIKFDGEDGLDYGGLSREFFFLLSHEMFNPFYCLFEYSAHDNYTLQINPHSGVNPEHLNYFKFIGRVVGLAIFHRRFLDSFFIGAFYKMMLRKKVSLQDMEGVDEDLHRNLTWTLDNDIEGIIELTFAVDDEKFGERRTIDLKPGGRDIPVTNENKGEYVELVTEWKIVKRVEEQFNAFMSGFNELIPADLVNVFDERELELLIGGIADIDVDDWKKHTDYRGYQESDEVIQNFWKIVRTWDAEQKSRLLQFTTGTSRIPVNGFKDLQGSDGPRRFTIEKSGDPGALPKSHTCFNRLDLPPYKTNDVLEHKLSIAVEETLGFGQE</sequence>
<keyword id="KW-0963">Cytoplasm</keyword>
<keyword id="KW-0677">Repeat</keyword>
<keyword id="KW-0808">Transferase</keyword>
<keyword id="KW-0833">Ubl conjugation pathway</keyword>
<organism>
    <name type="scientific">Aspergillus flavus (strain ATCC 200026 / FGSC A1120 / IAM 13836 / NRRL 3357 / JCM 12722 / SRRC 167)</name>
    <dbReference type="NCBI Taxonomy" id="332952"/>
    <lineage>
        <taxon>Eukaryota</taxon>
        <taxon>Fungi</taxon>
        <taxon>Dikarya</taxon>
        <taxon>Ascomycota</taxon>
        <taxon>Pezizomycotina</taxon>
        <taxon>Eurotiomycetes</taxon>
        <taxon>Eurotiomycetidae</taxon>
        <taxon>Eurotiales</taxon>
        <taxon>Aspergillaceae</taxon>
        <taxon>Aspergillus</taxon>
        <taxon>Aspergillus subgen. Circumdati</taxon>
    </lineage>
</organism>
<proteinExistence type="inferred from homology"/>
<gene>
    <name type="primary">hulA</name>
    <name type="ORF">AFLA_021670</name>
</gene>
<name>RSP5_ASPFN</name>
<reference key="1">
    <citation type="journal article" date="2015" name="Genome Announc.">
        <title>Genome sequence of Aspergillus flavus NRRL 3357, a strain that causes aflatoxin contamination of food and feed.</title>
        <authorList>
            <person name="Nierman W.C."/>
            <person name="Yu J."/>
            <person name="Fedorova-Abrams N.D."/>
            <person name="Losada L."/>
            <person name="Cleveland T.E."/>
            <person name="Bhatnagar D."/>
            <person name="Bennett J.W."/>
            <person name="Dean R."/>
            <person name="Payne G.A."/>
        </authorList>
    </citation>
    <scope>NUCLEOTIDE SEQUENCE [LARGE SCALE GENOMIC DNA]</scope>
    <source>
        <strain>ATCC 200026 / FGSC A1120 / IAM 13836 / NRRL 3357 / JCM 12722 / SRRC 167</strain>
    </source>
</reference>
<feature type="chain" id="PRO_0000395705" description="Probable E3 ubiquitin-protein ligase hulA">
    <location>
        <begin position="1"/>
        <end position="812"/>
    </location>
</feature>
<feature type="domain" description="C2" evidence="3">
    <location>
        <begin position="1"/>
        <end position="109"/>
    </location>
</feature>
<feature type="domain" description="WW 1" evidence="5">
    <location>
        <begin position="226"/>
        <end position="259"/>
    </location>
</feature>
<feature type="domain" description="WW 2" evidence="5">
    <location>
        <begin position="330"/>
        <end position="363"/>
    </location>
</feature>
<feature type="domain" description="WW 3" evidence="5">
    <location>
        <begin position="390"/>
        <end position="423"/>
    </location>
</feature>
<feature type="domain" description="HECT" evidence="4">
    <location>
        <begin position="479"/>
        <end position="812"/>
    </location>
</feature>
<feature type="region of interest" description="Disordered" evidence="6">
    <location>
        <begin position="131"/>
        <end position="235"/>
    </location>
</feature>
<feature type="region of interest" description="Disordered" evidence="6">
    <location>
        <begin position="250"/>
        <end position="350"/>
    </location>
</feature>
<feature type="compositionally biased region" description="Polar residues" evidence="6">
    <location>
        <begin position="148"/>
        <end position="165"/>
    </location>
</feature>
<feature type="compositionally biased region" description="Polar residues" evidence="6">
    <location>
        <begin position="174"/>
        <end position="199"/>
    </location>
</feature>
<feature type="compositionally biased region" description="Polar residues" evidence="6">
    <location>
        <begin position="214"/>
        <end position="223"/>
    </location>
</feature>
<feature type="compositionally biased region" description="Polar residues" evidence="6">
    <location>
        <begin position="250"/>
        <end position="267"/>
    </location>
</feature>
<feature type="compositionally biased region" description="Basic and acidic residues" evidence="6">
    <location>
        <begin position="276"/>
        <end position="291"/>
    </location>
</feature>
<feature type="compositionally biased region" description="Polar residues" evidence="6">
    <location>
        <begin position="292"/>
        <end position="306"/>
    </location>
</feature>
<feature type="compositionally biased region" description="Low complexity" evidence="6">
    <location>
        <begin position="307"/>
        <end position="330"/>
    </location>
</feature>
<feature type="active site" description="Glycyl thioester intermediate" evidence="4">
    <location>
        <position position="780"/>
    </location>
</feature>
<evidence type="ECO:0000250" key="1">
    <source>
        <dbReference type="UniProtKB" id="P39940"/>
    </source>
</evidence>
<evidence type="ECO:0000250" key="2">
    <source>
        <dbReference type="UniProtKB" id="Q5BDP1"/>
    </source>
</evidence>
<evidence type="ECO:0000255" key="3">
    <source>
        <dbReference type="PROSITE-ProRule" id="PRU00041"/>
    </source>
</evidence>
<evidence type="ECO:0000255" key="4">
    <source>
        <dbReference type="PROSITE-ProRule" id="PRU00104"/>
    </source>
</evidence>
<evidence type="ECO:0000255" key="5">
    <source>
        <dbReference type="PROSITE-ProRule" id="PRU00224"/>
    </source>
</evidence>
<evidence type="ECO:0000256" key="6">
    <source>
        <dbReference type="SAM" id="MobiDB-lite"/>
    </source>
</evidence>
<evidence type="ECO:0000305" key="7"/>
<protein>
    <recommendedName>
        <fullName>Probable E3 ubiquitin-protein ligase hulA</fullName>
        <ecNumber>2.3.2.26</ecNumber>
    </recommendedName>
    <alternativeName>
        <fullName>HECT ubiquitin ligase A</fullName>
    </alternativeName>
    <alternativeName>
        <fullName>HECT-type E3 ubiquitin transferase hulA</fullName>
    </alternativeName>
</protein>